<organism>
    <name type="scientific">Paramecium tetraurelia</name>
    <dbReference type="NCBI Taxonomy" id="5888"/>
    <lineage>
        <taxon>Eukaryota</taxon>
        <taxon>Sar</taxon>
        <taxon>Alveolata</taxon>
        <taxon>Ciliophora</taxon>
        <taxon>Intramacronucleata</taxon>
        <taxon>Oligohymenophorea</taxon>
        <taxon>Peniculida</taxon>
        <taxon>Parameciidae</taxon>
        <taxon>Paramecium</taxon>
    </lineage>
</organism>
<accession>A0E3W6</accession>
<comment type="function">
    <text evidence="1">Catalyzes the epimerization of the S- and R-forms of NAD(P)HX, a damaged form of NAD(P)H that is a result of enzymatic or heat-dependent hydration. This is a prerequisite for the S-specific NAD(P)H-hydrate dehydratase to allow the repair of both epimers of NAD(P)HX.</text>
</comment>
<comment type="catalytic activity">
    <reaction>
        <text>(6R)-NADHX = (6S)-NADHX</text>
        <dbReference type="Rhea" id="RHEA:32215"/>
        <dbReference type="ChEBI" id="CHEBI:64074"/>
        <dbReference type="ChEBI" id="CHEBI:64075"/>
        <dbReference type="EC" id="5.1.99.6"/>
    </reaction>
</comment>
<comment type="catalytic activity">
    <reaction>
        <text>(6R)-NADPHX = (6S)-NADPHX</text>
        <dbReference type="Rhea" id="RHEA:32227"/>
        <dbReference type="ChEBI" id="CHEBI:64076"/>
        <dbReference type="ChEBI" id="CHEBI:64077"/>
        <dbReference type="EC" id="5.1.99.6"/>
    </reaction>
</comment>
<comment type="cofactor">
    <cofactor evidence="1">
        <name>K(+)</name>
        <dbReference type="ChEBI" id="CHEBI:29103"/>
    </cofactor>
    <text evidence="1">Binds 1 potassium ion per subunit.</text>
</comment>
<comment type="similarity">
    <text evidence="1">Belongs to the NnrE/AIBP family.</text>
</comment>
<evidence type="ECO:0000255" key="1">
    <source>
        <dbReference type="HAMAP-Rule" id="MF_03159"/>
    </source>
</evidence>
<keyword id="KW-0413">Isomerase</keyword>
<keyword id="KW-0479">Metal-binding</keyword>
<keyword id="KW-0520">NAD</keyword>
<keyword id="KW-0521">NADP</keyword>
<keyword id="KW-0547">Nucleotide-binding</keyword>
<keyword id="KW-0630">Potassium</keyword>
<keyword id="KW-1185">Reference proteome</keyword>
<reference key="1">
    <citation type="journal article" date="2006" name="Nature">
        <title>Global trends of whole-genome duplications revealed by the ciliate Paramecium tetraurelia.</title>
        <authorList>
            <person name="Aury J.-M."/>
            <person name="Jaillon O."/>
            <person name="Duret L."/>
            <person name="Noel B."/>
            <person name="Jubin C."/>
            <person name="Porcel B.M."/>
            <person name="Segurens B."/>
            <person name="Daubin V."/>
            <person name="Anthouard V."/>
            <person name="Aiach N."/>
            <person name="Arnaiz O."/>
            <person name="Billaut A."/>
            <person name="Beisson J."/>
            <person name="Blanc I."/>
            <person name="Bouhouche K."/>
            <person name="Camara F."/>
            <person name="Duharcourt S."/>
            <person name="Guigo R."/>
            <person name="Gogendeau D."/>
            <person name="Katinka M."/>
            <person name="Keller A.-M."/>
            <person name="Kissmehl R."/>
            <person name="Klotz C."/>
            <person name="Koll F."/>
            <person name="Le Mouel A."/>
            <person name="Lepere G."/>
            <person name="Malinsky S."/>
            <person name="Nowacki M."/>
            <person name="Nowak J.K."/>
            <person name="Plattner H."/>
            <person name="Poulain J."/>
            <person name="Ruiz F."/>
            <person name="Serrano V."/>
            <person name="Zagulski M."/>
            <person name="Dessen P."/>
            <person name="Betermier M."/>
            <person name="Weissenbach J."/>
            <person name="Scarpelli C."/>
            <person name="Schaechter V."/>
            <person name="Sperling L."/>
            <person name="Meyer E."/>
            <person name="Cohen J."/>
            <person name="Wincker P."/>
        </authorList>
    </citation>
    <scope>NUCLEOTIDE SEQUENCE [LARGE SCALE GENOMIC DNA]</scope>
    <source>
        <strain>Stock d4-2</strain>
    </source>
</reference>
<name>NNRE_PARTE</name>
<gene>
    <name type="ORF">GSPATT00023156001</name>
</gene>
<feature type="chain" id="PRO_0000416324" description="NAD(P)H-hydrate epimerase">
    <location>
        <begin position="1"/>
        <end position="233"/>
    </location>
</feature>
<feature type="domain" description="YjeF N-terminal" evidence="1">
    <location>
        <begin position="15"/>
        <end position="218"/>
    </location>
</feature>
<feature type="binding site" evidence="1">
    <location>
        <begin position="67"/>
        <end position="71"/>
    </location>
    <ligand>
        <name>(6S)-NADPHX</name>
        <dbReference type="ChEBI" id="CHEBI:64076"/>
    </ligand>
</feature>
<feature type="binding site" evidence="1">
    <location>
        <position position="68"/>
    </location>
    <ligand>
        <name>K(+)</name>
        <dbReference type="ChEBI" id="CHEBI:29103"/>
    </ligand>
</feature>
<feature type="binding site" evidence="1">
    <location>
        <position position="128"/>
    </location>
    <ligand>
        <name>K(+)</name>
        <dbReference type="ChEBI" id="CHEBI:29103"/>
    </ligand>
</feature>
<feature type="binding site" evidence="1">
    <location>
        <begin position="132"/>
        <end position="138"/>
    </location>
    <ligand>
        <name>(6S)-NADPHX</name>
        <dbReference type="ChEBI" id="CHEBI:64076"/>
    </ligand>
</feature>
<feature type="binding site" evidence="1">
    <location>
        <position position="143"/>
    </location>
    <ligand>
        <name>(6S)-NADPHX</name>
        <dbReference type="ChEBI" id="CHEBI:64076"/>
    </ligand>
</feature>
<feature type="binding site" evidence="1">
    <location>
        <position position="161"/>
    </location>
    <ligand>
        <name>(6S)-NADPHX</name>
        <dbReference type="ChEBI" id="CHEBI:64076"/>
    </ligand>
</feature>
<feature type="binding site" evidence="1">
    <location>
        <position position="164"/>
    </location>
    <ligand>
        <name>K(+)</name>
        <dbReference type="ChEBI" id="CHEBI:29103"/>
    </ligand>
</feature>
<sequence length="233" mass="26540">MQQLNKISYLNQIQSQQFDVELMSEEVGFTLDQLMELAGQSIANTVVQLNKEGKSYNKILVLCGPGNNGGDGIVSARHLKQFGLQPEIALFREVKNPFFNRLLNQCKYNLIPIHYELQDLEKYDLLIDAILGFSFKPPLREPYDKPIQQLKTTKTPILSVDIPSGWDVEQGNAQDFFTPQYLISLTLPKLGVKSFKGRHFIGGRFIPLKLQEKYNFIVPEYQGSDTILELSNL</sequence>
<dbReference type="EC" id="5.1.99.6"/>
<dbReference type="EMBL" id="CT868657">
    <property type="protein sequence ID" value="CAK89983.1"/>
    <property type="molecule type" value="Genomic_DNA"/>
</dbReference>
<dbReference type="RefSeq" id="XP_001457380.1">
    <property type="nucleotide sequence ID" value="XM_001457343.1"/>
</dbReference>
<dbReference type="SMR" id="A0E3W6"/>
<dbReference type="FunCoup" id="A0E3W6">
    <property type="interactions" value="44"/>
</dbReference>
<dbReference type="STRING" id="5888.A0E3W6"/>
<dbReference type="EnsemblProtists" id="CAK89983">
    <property type="protein sequence ID" value="CAK89983"/>
    <property type="gene ID" value="GSPATT00023156001"/>
</dbReference>
<dbReference type="GeneID" id="5043165"/>
<dbReference type="KEGG" id="ptm:GSPATT00023156001"/>
<dbReference type="eggNOG" id="KOG2585">
    <property type="taxonomic scope" value="Eukaryota"/>
</dbReference>
<dbReference type="HOGENOM" id="CLU_024853_3_0_1"/>
<dbReference type="InParanoid" id="A0E3W6"/>
<dbReference type="OMA" id="RHLFHYG"/>
<dbReference type="OrthoDB" id="10064708at2759"/>
<dbReference type="Proteomes" id="UP000000600">
    <property type="component" value="Partially assembled WGS sequence"/>
</dbReference>
<dbReference type="GO" id="GO:0005739">
    <property type="term" value="C:mitochondrion"/>
    <property type="evidence" value="ECO:0000318"/>
    <property type="project" value="GO_Central"/>
</dbReference>
<dbReference type="GO" id="GO:0046872">
    <property type="term" value="F:metal ion binding"/>
    <property type="evidence" value="ECO:0007669"/>
    <property type="project" value="UniProtKB-KW"/>
</dbReference>
<dbReference type="GO" id="GO:0052856">
    <property type="term" value="F:NAD(P)HX epimerase activity"/>
    <property type="evidence" value="ECO:0000318"/>
    <property type="project" value="GO_Central"/>
</dbReference>
<dbReference type="GO" id="GO:0000166">
    <property type="term" value="F:nucleotide binding"/>
    <property type="evidence" value="ECO:0007669"/>
    <property type="project" value="UniProtKB-KW"/>
</dbReference>
<dbReference type="Gene3D" id="3.40.50.10260">
    <property type="entry name" value="YjeF N-terminal domain"/>
    <property type="match status" value="1"/>
</dbReference>
<dbReference type="HAMAP" id="MF_01966">
    <property type="entry name" value="NADHX_epimerase"/>
    <property type="match status" value="1"/>
</dbReference>
<dbReference type="InterPro" id="IPR004443">
    <property type="entry name" value="YjeF_N_dom"/>
</dbReference>
<dbReference type="InterPro" id="IPR036652">
    <property type="entry name" value="YjeF_N_dom_sf"/>
</dbReference>
<dbReference type="InterPro" id="IPR032976">
    <property type="entry name" value="YJEFN_prot_NAXE-like"/>
</dbReference>
<dbReference type="NCBIfam" id="TIGR00197">
    <property type="entry name" value="yjeF_nterm"/>
    <property type="match status" value="1"/>
</dbReference>
<dbReference type="PANTHER" id="PTHR13232">
    <property type="entry name" value="NAD(P)H-HYDRATE EPIMERASE"/>
    <property type="match status" value="1"/>
</dbReference>
<dbReference type="PANTHER" id="PTHR13232:SF10">
    <property type="entry name" value="NAD(P)H-HYDRATE EPIMERASE"/>
    <property type="match status" value="1"/>
</dbReference>
<dbReference type="Pfam" id="PF03853">
    <property type="entry name" value="YjeF_N"/>
    <property type="match status" value="1"/>
</dbReference>
<dbReference type="SUPFAM" id="SSF64153">
    <property type="entry name" value="YjeF N-terminal domain-like"/>
    <property type="match status" value="1"/>
</dbReference>
<dbReference type="PROSITE" id="PS51385">
    <property type="entry name" value="YJEF_N"/>
    <property type="match status" value="1"/>
</dbReference>
<protein>
    <recommendedName>
        <fullName evidence="1">NAD(P)H-hydrate epimerase</fullName>
        <ecNumber>5.1.99.6</ecNumber>
    </recommendedName>
    <alternativeName>
        <fullName evidence="1">NAD(P)HX epimerase</fullName>
    </alternativeName>
</protein>
<proteinExistence type="inferred from homology"/>